<accession>F1N5S9</accession>
<accession>A6QQX3</accession>
<evidence type="ECO:0000250" key="1">
    <source>
        <dbReference type="UniProtKB" id="Q8IVP5"/>
    </source>
</evidence>
<evidence type="ECO:0000255" key="2"/>
<evidence type="ECO:0000305" key="3"/>
<organism>
    <name type="scientific">Bos taurus</name>
    <name type="common">Bovine</name>
    <dbReference type="NCBI Taxonomy" id="9913"/>
    <lineage>
        <taxon>Eukaryota</taxon>
        <taxon>Metazoa</taxon>
        <taxon>Chordata</taxon>
        <taxon>Craniata</taxon>
        <taxon>Vertebrata</taxon>
        <taxon>Euteleostomi</taxon>
        <taxon>Mammalia</taxon>
        <taxon>Eutheria</taxon>
        <taxon>Laurasiatheria</taxon>
        <taxon>Artiodactyla</taxon>
        <taxon>Ruminantia</taxon>
        <taxon>Pecora</taxon>
        <taxon>Bovidae</taxon>
        <taxon>Bovinae</taxon>
        <taxon>Bos</taxon>
    </lineage>
</organism>
<dbReference type="EMBL" id="DAAA02073542">
    <property type="status" value="NOT_ANNOTATED_CDS"/>
    <property type="molecule type" value="Genomic_DNA"/>
</dbReference>
<dbReference type="EMBL" id="BC150029">
    <property type="protein sequence ID" value="AAI50030.1"/>
    <property type="molecule type" value="mRNA"/>
</dbReference>
<dbReference type="RefSeq" id="NP_001098452.1">
    <property type="nucleotide sequence ID" value="NM_001104982.1"/>
</dbReference>
<dbReference type="SMR" id="F1N5S9"/>
<dbReference type="FunCoup" id="F1N5S9">
    <property type="interactions" value="1094"/>
</dbReference>
<dbReference type="STRING" id="9913.ENSBTAP00000002144"/>
<dbReference type="PaxDb" id="9913-ENSBTAP00000002144"/>
<dbReference type="Ensembl" id="ENSBTAT00000002144.5">
    <property type="protein sequence ID" value="ENSBTAP00000002144.4"/>
    <property type="gene ID" value="ENSBTAG00000001637.6"/>
</dbReference>
<dbReference type="GeneID" id="518258"/>
<dbReference type="KEGG" id="bta:518258"/>
<dbReference type="CTD" id="139341"/>
<dbReference type="VEuPathDB" id="HostDB:ENSBTAG00000001637"/>
<dbReference type="VGNC" id="VGNC:29143">
    <property type="gene designation" value="FUNDC1"/>
</dbReference>
<dbReference type="eggNOG" id="KOG4099">
    <property type="taxonomic scope" value="Eukaryota"/>
</dbReference>
<dbReference type="GeneTree" id="ENSGT00940000154517"/>
<dbReference type="HOGENOM" id="CLU_095425_2_0_1"/>
<dbReference type="InParanoid" id="F1N5S9"/>
<dbReference type="OMA" id="NAPPQEY"/>
<dbReference type="OrthoDB" id="163794at2759"/>
<dbReference type="TreeFam" id="TF300280"/>
<dbReference type="Reactome" id="R-BTA-8934903">
    <property type="pathway name" value="Receptor Mediated Mitophagy"/>
</dbReference>
<dbReference type="Proteomes" id="UP000009136">
    <property type="component" value="Chromosome X"/>
</dbReference>
<dbReference type="Bgee" id="ENSBTAG00000001637">
    <property type="expression patterns" value="Expressed in adenohypophysis and 105 other cell types or tissues"/>
</dbReference>
<dbReference type="GO" id="GO:0005741">
    <property type="term" value="C:mitochondrial outer membrane"/>
    <property type="evidence" value="ECO:0000250"/>
    <property type="project" value="UniProtKB"/>
</dbReference>
<dbReference type="GO" id="GO:0000422">
    <property type="term" value="P:autophagy of mitochondrion"/>
    <property type="evidence" value="ECO:0000250"/>
    <property type="project" value="UniProtKB"/>
</dbReference>
<dbReference type="GO" id="GO:0001666">
    <property type="term" value="P:response to hypoxia"/>
    <property type="evidence" value="ECO:0000250"/>
    <property type="project" value="UniProtKB"/>
</dbReference>
<dbReference type="InterPro" id="IPR007014">
    <property type="entry name" value="FUN14"/>
</dbReference>
<dbReference type="PANTHER" id="PTHR21346">
    <property type="entry name" value="FUN14 DOMAIN CONTAINING"/>
    <property type="match status" value="1"/>
</dbReference>
<dbReference type="PANTHER" id="PTHR21346:SF2">
    <property type="entry name" value="FUN14 DOMAIN-CONTAINING PROTEIN 1"/>
    <property type="match status" value="1"/>
</dbReference>
<dbReference type="Pfam" id="PF04930">
    <property type="entry name" value="FUN14"/>
    <property type="match status" value="1"/>
</dbReference>
<gene>
    <name type="primary">FUNDC1</name>
</gene>
<proteinExistence type="evidence at transcript level"/>
<reference key="1">
    <citation type="journal article" date="2009" name="Genome Biol.">
        <title>A whole-genome assembly of the domestic cow, Bos taurus.</title>
        <authorList>
            <person name="Zimin A.V."/>
            <person name="Delcher A.L."/>
            <person name="Florea L."/>
            <person name="Kelley D.R."/>
            <person name="Schatz M.C."/>
            <person name="Puiu D."/>
            <person name="Hanrahan F."/>
            <person name="Pertea G."/>
            <person name="Van Tassell C.P."/>
            <person name="Sonstegard T.S."/>
            <person name="Marcais G."/>
            <person name="Roberts M."/>
            <person name="Subramanian P."/>
            <person name="Yorke J.A."/>
            <person name="Salzberg S.L."/>
        </authorList>
    </citation>
    <scope>NUCLEOTIDE SEQUENCE [LARGE SCALE GENOMIC DNA]</scope>
    <source>
        <strain>Hereford</strain>
    </source>
</reference>
<reference key="2">
    <citation type="submission" date="2007-07" db="EMBL/GenBank/DDBJ databases">
        <authorList>
            <consortium name="NIH - Mammalian Gene Collection (MGC) project"/>
        </authorList>
    </citation>
    <scope>NUCLEOTIDE SEQUENCE [LARGE SCALE MRNA]</scope>
    <source>
        <strain>Hereford</strain>
        <tissue>Fetal pons</tissue>
    </source>
</reference>
<name>FUND1_BOVIN</name>
<sequence length="155" mass="17173">MATRNPPPQEYESDDDSYEVLDLTEYARRHHWWNRVFGHSSGPMVEKYSVATQIVMGGVSGWCAGFLFQKVGKLAATAVGGGFLLLQIASHSGYVQIDWKRVEKDVNKAKRQIKKRANKAAPEINNIIEEATEFVKQNIVISSGFVGGFLLGLAS</sequence>
<feature type="chain" id="PRO_0000416275" description="FUN14 domain-containing protein 1">
    <location>
        <begin position="1"/>
        <end position="155"/>
    </location>
</feature>
<feature type="topological domain" description="Cytoplasmic" evidence="2">
    <location>
        <begin position="1"/>
        <end position="47"/>
    </location>
</feature>
<feature type="transmembrane region" description="Helical" evidence="2">
    <location>
        <begin position="48"/>
        <end position="68"/>
    </location>
</feature>
<feature type="topological domain" description="Mitochondrial intermembrane" evidence="2">
    <location>
        <begin position="69"/>
        <end position="74"/>
    </location>
</feature>
<feature type="transmembrane region" description="Helical" evidence="2">
    <location>
        <begin position="75"/>
        <end position="95"/>
    </location>
</feature>
<feature type="topological domain" description="Cytoplasmic" evidence="2">
    <location>
        <begin position="96"/>
        <end position="133"/>
    </location>
</feature>
<feature type="transmembrane region" description="Helical" evidence="2">
    <location>
        <begin position="134"/>
        <end position="154"/>
    </location>
</feature>
<feature type="topological domain" description="Mitochondrial intermembrane" evidence="2">
    <location>
        <position position="155"/>
    </location>
</feature>
<feature type="short sequence motif" description="YXXL">
    <location>
        <begin position="18"/>
        <end position="21"/>
    </location>
</feature>
<feature type="modified residue" description="Phosphoserine" evidence="1">
    <location>
        <position position="13"/>
    </location>
</feature>
<feature type="modified residue" description="Phosphoserine" evidence="1">
    <location>
        <position position="17"/>
    </location>
</feature>
<feature type="modified residue" description="Phosphotyrosine; by SRC" evidence="1">
    <location>
        <position position="18"/>
    </location>
</feature>
<feature type="cross-link" description="Glycyl lysine isopeptide (Lys-Gly) (interchain with G-Cter in ubiquitin)" evidence="1">
    <location>
        <position position="119"/>
    </location>
</feature>
<feature type="sequence conflict" description="In Ref. 2; AAI50030." evidence="3" ref="2">
    <original>I</original>
    <variation>V</variation>
    <location>
        <position position="113"/>
    </location>
</feature>
<comment type="function">
    <text evidence="1">Integral mitochondrial outer-membrane protein that mediates the formation of mitochondria-associated endoplasmic reticulum membranes (MAMs). In turn, mediates angiogenesis and neoangiogenesis through interference with intracellular Ca(2+) communication and regulation of the vascular endothelial growth factor receptor KDR/VEGFR2 expression at both mRNA and protein levels. Also acts as an activator of hypoxia-induced mitophagy, an important mechanism for mitochondrial quality and homeostasis, by interacting with and recruiting LC3 protein family to mitochondria. Mechanistically, recruits DRP1 at ER-mitochondria contact sites leading to DRP1 oligomerization and GTPase activity to facilitate mitochondrial fission during hypoxia. Additionally, plays a role in hepatic ferroptosis by interacting directly with glutathione peroxidase/GPX4 to facilitate its recruitment into mitochondria through TOM/TIM complex where it is degraded by mitophagy.</text>
</comment>
<comment type="subunit">
    <text evidence="1">Interacts (via YXXL motif) with MAP1 LC3 family proteins MAP1LC3A, MAP1LC3B and GABARAP. Interacts with DNM1L/DPR1. Interacts with GPX4.</text>
</comment>
<comment type="subcellular location">
    <subcellularLocation>
        <location evidence="1">Mitochondrion outer membrane</location>
        <topology evidence="1">Multi-pass membrane protein</topology>
    </subcellularLocation>
</comment>
<comment type="domain">
    <text evidence="1">The YXXL motif mediates the interaction with MAP1 LC3 family proteins MAP1LC3A, MAP1LC3B and GABARAP.</text>
</comment>
<comment type="PTM">
    <text evidence="1">Phosphorylation at Ser-13 by CK2 and at Tyr-18 by SRC inhibits activation of mitophagy. Following hypoxia, dephosphorylated at Tyr-18, leading to interaction with MAP1 LC3 family proteins and triggering mitophagy. Dephosphorylation is mediated by PGAM5. Phosphorylated by ULK1 at Ser-17 which enhances FUNDC1 binding to LC3.</text>
</comment>
<comment type="PTM">
    <text evidence="1">Ubiquitinated on Lys-119. Deubiquitinated by USP19; leading to hypoxia-induced DRP1 oligomerization and GTPase activity.</text>
</comment>
<comment type="similarity">
    <text evidence="3">Belongs to the FUN14 family.</text>
</comment>
<keyword id="KW-0072">Autophagy</keyword>
<keyword id="KW-1017">Isopeptide bond</keyword>
<keyword id="KW-0472">Membrane</keyword>
<keyword id="KW-0496">Mitochondrion</keyword>
<keyword id="KW-1000">Mitochondrion outer membrane</keyword>
<keyword id="KW-0597">Phosphoprotein</keyword>
<keyword id="KW-1185">Reference proteome</keyword>
<keyword id="KW-0812">Transmembrane</keyword>
<keyword id="KW-1133">Transmembrane helix</keyword>
<keyword id="KW-0832">Ubl conjugation</keyword>
<protein>
    <recommendedName>
        <fullName>FUN14 domain-containing protein 1</fullName>
    </recommendedName>
</protein>